<evidence type="ECO:0000255" key="1">
    <source>
        <dbReference type="HAMAP-Rule" id="MF_00605"/>
    </source>
</evidence>
<comment type="function">
    <text evidence="1">Specifically methylates guanosine-37 in various tRNAs.</text>
</comment>
<comment type="catalytic activity">
    <reaction evidence="1">
        <text>guanosine(37) in tRNA + S-adenosyl-L-methionine = N(1)-methylguanosine(37) in tRNA + S-adenosyl-L-homocysteine + H(+)</text>
        <dbReference type="Rhea" id="RHEA:36899"/>
        <dbReference type="Rhea" id="RHEA-COMP:10145"/>
        <dbReference type="Rhea" id="RHEA-COMP:10147"/>
        <dbReference type="ChEBI" id="CHEBI:15378"/>
        <dbReference type="ChEBI" id="CHEBI:57856"/>
        <dbReference type="ChEBI" id="CHEBI:59789"/>
        <dbReference type="ChEBI" id="CHEBI:73542"/>
        <dbReference type="ChEBI" id="CHEBI:74269"/>
        <dbReference type="EC" id="2.1.1.228"/>
    </reaction>
</comment>
<comment type="subunit">
    <text evidence="1">Homodimer.</text>
</comment>
<comment type="subcellular location">
    <subcellularLocation>
        <location evidence="1">Cytoplasm</location>
    </subcellularLocation>
</comment>
<comment type="similarity">
    <text evidence="1">Belongs to the RNA methyltransferase TrmD family.</text>
</comment>
<accession>Q8CY26</accession>
<name>TRMD_COREF</name>
<feature type="chain" id="PRO_0000060364" description="tRNA (guanine-N(1)-)-methyltransferase">
    <location>
        <begin position="1"/>
        <end position="291"/>
    </location>
</feature>
<feature type="binding site" evidence="1">
    <location>
        <position position="160"/>
    </location>
    <ligand>
        <name>S-adenosyl-L-methionine</name>
        <dbReference type="ChEBI" id="CHEBI:59789"/>
    </ligand>
</feature>
<feature type="binding site" evidence="1">
    <location>
        <begin position="184"/>
        <end position="189"/>
    </location>
    <ligand>
        <name>S-adenosyl-L-methionine</name>
        <dbReference type="ChEBI" id="CHEBI:59789"/>
    </ligand>
</feature>
<dbReference type="EC" id="2.1.1.228" evidence="1"/>
<dbReference type="EMBL" id="BA000035">
    <property type="protein sequence ID" value="BAC18766.1"/>
    <property type="molecule type" value="Genomic_DNA"/>
</dbReference>
<dbReference type="RefSeq" id="WP_006767952.1">
    <property type="nucleotide sequence ID" value="NC_004369.1"/>
</dbReference>
<dbReference type="SMR" id="Q8CY26"/>
<dbReference type="STRING" id="196164.gene:10742384"/>
<dbReference type="KEGG" id="cef:CE1956"/>
<dbReference type="eggNOG" id="COG0336">
    <property type="taxonomic scope" value="Bacteria"/>
</dbReference>
<dbReference type="HOGENOM" id="CLU_047363_0_0_11"/>
<dbReference type="OrthoDB" id="9807416at2"/>
<dbReference type="Proteomes" id="UP000001409">
    <property type="component" value="Chromosome"/>
</dbReference>
<dbReference type="GO" id="GO:0005829">
    <property type="term" value="C:cytosol"/>
    <property type="evidence" value="ECO:0007669"/>
    <property type="project" value="TreeGrafter"/>
</dbReference>
<dbReference type="GO" id="GO:0052906">
    <property type="term" value="F:tRNA (guanine(37)-N1)-methyltransferase activity"/>
    <property type="evidence" value="ECO:0007669"/>
    <property type="project" value="UniProtKB-UniRule"/>
</dbReference>
<dbReference type="GO" id="GO:0002939">
    <property type="term" value="P:tRNA N1-guanine methylation"/>
    <property type="evidence" value="ECO:0007669"/>
    <property type="project" value="TreeGrafter"/>
</dbReference>
<dbReference type="CDD" id="cd18080">
    <property type="entry name" value="TrmD-like"/>
    <property type="match status" value="1"/>
</dbReference>
<dbReference type="FunFam" id="1.10.1270.20:FF:000001">
    <property type="entry name" value="tRNA (guanine-N(1)-)-methyltransferase"/>
    <property type="match status" value="1"/>
</dbReference>
<dbReference type="Gene3D" id="3.40.1280.10">
    <property type="match status" value="1"/>
</dbReference>
<dbReference type="Gene3D" id="1.10.1270.20">
    <property type="entry name" value="tRNA(m1g37)methyltransferase, domain 2"/>
    <property type="match status" value="1"/>
</dbReference>
<dbReference type="HAMAP" id="MF_00605">
    <property type="entry name" value="TrmD"/>
    <property type="match status" value="1"/>
</dbReference>
<dbReference type="InterPro" id="IPR029028">
    <property type="entry name" value="Alpha/beta_knot_MTases"/>
</dbReference>
<dbReference type="InterPro" id="IPR023148">
    <property type="entry name" value="tRNA_m1G_MeTrfase_C_sf"/>
</dbReference>
<dbReference type="InterPro" id="IPR002649">
    <property type="entry name" value="tRNA_m1G_MeTrfase_TrmD"/>
</dbReference>
<dbReference type="InterPro" id="IPR029026">
    <property type="entry name" value="tRNA_m1G_MTases_N"/>
</dbReference>
<dbReference type="InterPro" id="IPR016009">
    <property type="entry name" value="tRNA_MeTrfase_TRMD/TRM10"/>
</dbReference>
<dbReference type="NCBIfam" id="NF000648">
    <property type="entry name" value="PRK00026.1"/>
    <property type="match status" value="1"/>
</dbReference>
<dbReference type="PANTHER" id="PTHR46417">
    <property type="entry name" value="TRNA (GUANINE-N(1)-)-METHYLTRANSFERASE"/>
    <property type="match status" value="1"/>
</dbReference>
<dbReference type="PANTHER" id="PTHR46417:SF1">
    <property type="entry name" value="TRNA (GUANINE-N(1)-)-METHYLTRANSFERASE"/>
    <property type="match status" value="1"/>
</dbReference>
<dbReference type="Pfam" id="PF01746">
    <property type="entry name" value="tRNA_m1G_MT"/>
    <property type="match status" value="2"/>
</dbReference>
<dbReference type="PIRSF" id="PIRSF000386">
    <property type="entry name" value="tRNA_mtase"/>
    <property type="match status" value="1"/>
</dbReference>
<dbReference type="SUPFAM" id="SSF75217">
    <property type="entry name" value="alpha/beta knot"/>
    <property type="match status" value="1"/>
</dbReference>
<keyword id="KW-0963">Cytoplasm</keyword>
<keyword id="KW-0489">Methyltransferase</keyword>
<keyword id="KW-1185">Reference proteome</keyword>
<keyword id="KW-0949">S-adenosyl-L-methionine</keyword>
<keyword id="KW-0808">Transferase</keyword>
<keyword id="KW-0819">tRNA processing</keyword>
<organism>
    <name type="scientific">Corynebacterium efficiens (strain DSM 44549 / YS-314 / AJ 12310 / JCM 11189 / NBRC 100395)</name>
    <dbReference type="NCBI Taxonomy" id="196164"/>
    <lineage>
        <taxon>Bacteria</taxon>
        <taxon>Bacillati</taxon>
        <taxon>Actinomycetota</taxon>
        <taxon>Actinomycetes</taxon>
        <taxon>Mycobacteriales</taxon>
        <taxon>Corynebacteriaceae</taxon>
        <taxon>Corynebacterium</taxon>
    </lineage>
</organism>
<proteinExistence type="inferred from homology"/>
<protein>
    <recommendedName>
        <fullName evidence="1">tRNA (guanine-N(1)-)-methyltransferase</fullName>
        <ecNumber evidence="1">2.1.1.228</ecNumber>
    </recommendedName>
    <alternativeName>
        <fullName evidence="1">M1G-methyltransferase</fullName>
    </alternativeName>
    <alternativeName>
        <fullName evidence="1">tRNA [GM37] methyltransferase</fullName>
    </alternativeName>
</protein>
<reference key="1">
    <citation type="journal article" date="2003" name="Genome Res.">
        <title>Comparative complete genome sequence analysis of the amino acid replacements responsible for the thermostability of Corynebacterium efficiens.</title>
        <authorList>
            <person name="Nishio Y."/>
            <person name="Nakamura Y."/>
            <person name="Kawarabayasi Y."/>
            <person name="Usuda Y."/>
            <person name="Kimura E."/>
            <person name="Sugimoto S."/>
            <person name="Matsui K."/>
            <person name="Yamagishi A."/>
            <person name="Kikuchi H."/>
            <person name="Ikeo K."/>
            <person name="Gojobori T."/>
        </authorList>
    </citation>
    <scope>NUCLEOTIDE SEQUENCE [LARGE SCALE GENOMIC DNA]</scope>
    <source>
        <strain>DSM 44549 / YS-314 / AJ 12310 / JCM 11189 / NBRC 100395</strain>
    </source>
</reference>
<gene>
    <name evidence="1" type="primary">trmD</name>
    <name type="ordered locus">CE1956</name>
</gene>
<sequence length="291" mass="32235">MNAVTSANNNTDNRRLRLDVVSIFPEYLDPLRHALLGKAIEDGYLEVGVHDLRDWATGGHKAVDDTPYGGGPGMVMKPEVWGPALDDVAAGRVAGWELESATPHRNVARHDELAGVDKHAYEGEDADLPLLLVPTPAGKPFTQADAQAWSNENHIVFACGRYEGIDQRVIEDARNRYRVREVSIGDYVLIGGEVAVLVIAEAVVRLIPGVLGNRRSHEEDSFSDGLLEGPSYTKPRTWRGLDVPEVLFSGNHARVDRWRRDQALLRTQRVRPELLDAVELTTEDRKVLGLD</sequence>